<keyword id="KW-0963">Cytoplasm</keyword>
<keyword id="KW-0408">Iron</keyword>
<keyword id="KW-0479">Metal-binding</keyword>
<keyword id="KW-0346">Stress response</keyword>
<name>DNRN_NEIGO</name>
<sequence>MTDFSVWEAAPFGATVDHILQRYHNVHRAQFEELVPLAQKVAQVHADTFPAEIAGLLADMRDELLMHMMKEERMLFPMINQGVGRGAAMPISVMMHEHEEHDRAIARLKELTGNFHAPEGACGSWTRLYALAKEMADDLNDHIHLENDILFARVLDS</sequence>
<dbReference type="EMBL" id="GG749389">
    <property type="protein sequence ID" value="EFF39466.2"/>
    <property type="molecule type" value="Genomic_DNA"/>
</dbReference>
<dbReference type="RefSeq" id="WP_003688853.1">
    <property type="nucleotide sequence ID" value="NZ_WHPL01000002.1"/>
</dbReference>
<dbReference type="SMR" id="D6JLP0"/>
<dbReference type="GeneID" id="66752992"/>
<dbReference type="OMA" id="ACTTWRV"/>
<dbReference type="GO" id="GO:0005737">
    <property type="term" value="C:cytoplasm"/>
    <property type="evidence" value="ECO:0007669"/>
    <property type="project" value="UniProtKB-SubCell"/>
</dbReference>
<dbReference type="GO" id="GO:0046872">
    <property type="term" value="F:metal ion binding"/>
    <property type="evidence" value="ECO:0007669"/>
    <property type="project" value="UniProtKB-KW"/>
</dbReference>
<dbReference type="GO" id="GO:0030091">
    <property type="term" value="P:protein repair"/>
    <property type="evidence" value="ECO:0000315"/>
    <property type="project" value="UniProtKB"/>
</dbReference>
<dbReference type="GO" id="GO:0051409">
    <property type="term" value="P:response to nitrosative stress"/>
    <property type="evidence" value="ECO:0000315"/>
    <property type="project" value="UniProtKB"/>
</dbReference>
<dbReference type="GO" id="GO:0006979">
    <property type="term" value="P:response to oxidative stress"/>
    <property type="evidence" value="ECO:0000315"/>
    <property type="project" value="UniProtKB"/>
</dbReference>
<dbReference type="Gene3D" id="1.20.120.520">
    <property type="entry name" value="nmb1532 protein domain like"/>
    <property type="match status" value="1"/>
</dbReference>
<dbReference type="InterPro" id="IPR048105">
    <property type="entry name" value="FeS_repair_DnrN"/>
</dbReference>
<dbReference type="InterPro" id="IPR012312">
    <property type="entry name" value="Hemerythrin-like"/>
</dbReference>
<dbReference type="InterPro" id="IPR019903">
    <property type="entry name" value="RIC_family"/>
</dbReference>
<dbReference type="NCBIfam" id="NF041614">
    <property type="entry name" value="FeSrepair_DnrN"/>
    <property type="match status" value="1"/>
</dbReference>
<dbReference type="PANTHER" id="PTHR36438">
    <property type="entry name" value="IRON-SULFUR CLUSTER REPAIR PROTEIN YTFE"/>
    <property type="match status" value="1"/>
</dbReference>
<dbReference type="PANTHER" id="PTHR36438:SF1">
    <property type="entry name" value="IRON-SULFUR CLUSTER REPAIR PROTEIN YTFE"/>
    <property type="match status" value="1"/>
</dbReference>
<dbReference type="Pfam" id="PF01814">
    <property type="entry name" value="Hemerythrin"/>
    <property type="match status" value="1"/>
</dbReference>
<proteinExistence type="evidence at protein level"/>
<protein>
    <recommendedName>
        <fullName>Iron-sulfur cluster repair protein DnrN</fullName>
    </recommendedName>
</protein>
<evidence type="ECO:0000269" key="1">
    <source>
    </source>
</evidence>
<evidence type="ECO:0000305" key="2"/>
<comment type="function">
    <text evidence="1">Di-iron-containing protein involved in the repair of iron-sulfur clusters damaged by oxidative and nitrosative stress conditions. Required to repair damage caused by nitric oxide to FNR and NsrR transcription factors.</text>
</comment>
<comment type="subcellular location">
    <subcellularLocation>
        <location evidence="2">Cytoplasm</location>
    </subcellularLocation>
</comment>
<comment type="disruption phenotype">
    <text evidence="1">Mutant is more sensitive to damage induced by a sudden exposure to nitric oxide and is more sensitive to hydrogen peroxide.</text>
</comment>
<comment type="similarity">
    <text evidence="2">Belongs to the RIC family.</text>
</comment>
<accession>D6JLP0</accession>
<organism>
    <name type="scientific">Neisseria gonorrhoeae</name>
    <dbReference type="NCBI Taxonomy" id="485"/>
    <lineage>
        <taxon>Bacteria</taxon>
        <taxon>Pseudomonadati</taxon>
        <taxon>Pseudomonadota</taxon>
        <taxon>Betaproteobacteria</taxon>
        <taxon>Neisseriales</taxon>
        <taxon>Neisseriaceae</taxon>
        <taxon>Neisseria</taxon>
    </lineage>
</organism>
<reference key="1">
    <citation type="submission" date="2010-02" db="EMBL/GenBank/DDBJ databases">
        <title>The genome sequence of Neisseria gonorrhoeae strain F62.</title>
        <authorList>
            <consortium name="The Broad Institute Genome Sequencing Platform"/>
            <person name="Ward D."/>
            <person name="Young S.K."/>
            <person name="Zeng Q."/>
            <person name="Koehrsen M."/>
            <person name="Alvarado L."/>
            <person name="Berlin A."/>
            <person name="Borenstein D."/>
            <person name="Chen Z."/>
            <person name="Engels R."/>
            <person name="Freedman E."/>
            <person name="Gellesch M."/>
            <person name="Goldberg J."/>
            <person name="Griggs A."/>
            <person name="Gujja S."/>
            <person name="Heiman D."/>
            <person name="Hepburn T."/>
            <person name="Howarth C."/>
            <person name="Jen D."/>
            <person name="Larson L."/>
            <person name="Mehta T."/>
            <person name="Park D."/>
            <person name="Pearson M."/>
            <person name="Roberts A."/>
            <person name="Saif S."/>
            <person name="Shea T."/>
            <person name="Shenoy N."/>
            <person name="Sisk P."/>
            <person name="Stolte C."/>
            <person name="Sykes S."/>
            <person name="Walk T."/>
            <person name="White J."/>
            <person name="Yandava C."/>
            <person name="Rice P."/>
            <person name="Seifert H."/>
            <person name="Haas B."/>
            <person name="Nusbaum C."/>
            <person name="Birren B."/>
        </authorList>
    </citation>
    <scope>NUCLEOTIDE SEQUENCE [LARGE SCALE GENOMIC DNA]</scope>
    <source>
        <strain>ATCC 33084 / F62 / M-1914</strain>
    </source>
</reference>
<reference key="2">
    <citation type="journal article" date="2008" name="J. Bacteriol.">
        <title>Widespread distribution in pathogenic bacteria of di-iron proteins that repair oxidative and nitrosative damage to iron-sulfur centers.</title>
        <authorList>
            <person name="Overton T.W."/>
            <person name="Justino M.C."/>
            <person name="Li Y."/>
            <person name="Baptista J.M."/>
            <person name="Melo A.M."/>
            <person name="Cole J.A."/>
            <person name="Saraiva L.M."/>
        </authorList>
    </citation>
    <scope>FUNCTION IN REPAIR OF IRON-SULFUR CENTERS</scope>
    <scope>DISRUPTION PHENOTYPE</scope>
    <source>
        <strain>ATCC 33084 / F62 / M-1914</strain>
    </source>
</reference>
<gene>
    <name type="primary">dnrN</name>
    <name type="ORF">NGNG_00128</name>
</gene>
<feature type="chain" id="PRO_0000406194" description="Iron-sulfur cluster repair protein DnrN">
    <location>
        <begin position="1"/>
        <end position="157"/>
    </location>
</feature>